<protein>
    <recommendedName>
        <fullName evidence="6">PAK4-inhibitor INKA1</fullName>
    </recommendedName>
    <alternativeName>
        <fullName evidence="5">Induced in neural crest by AP2-alpha protein homolog</fullName>
        <shortName evidence="5">Inca</shortName>
    </alternativeName>
    <alternativeName>
        <fullName evidence="7">Inka-box actin regulator 1</fullName>
    </alternativeName>
</protein>
<evidence type="ECO:0000250" key="1">
    <source>
        <dbReference type="UniProtKB" id="Q96EL1"/>
    </source>
</evidence>
<evidence type="ECO:0000256" key="2">
    <source>
        <dbReference type="SAM" id="MobiDB-lite"/>
    </source>
</evidence>
<evidence type="ECO:0000269" key="3">
    <source>
    </source>
</evidence>
<evidence type="ECO:0000269" key="4">
    <source>
    </source>
</evidence>
<evidence type="ECO:0000303" key="5">
    <source>
    </source>
</evidence>
<evidence type="ECO:0000305" key="6"/>
<evidence type="ECO:0000312" key="7">
    <source>
        <dbReference type="MGI" id="MGI:1915426"/>
    </source>
</evidence>
<proteinExistence type="evidence at protein level"/>
<reference key="1">
    <citation type="journal article" date="2005" name="Science">
        <title>The transcriptional landscape of the mammalian genome.</title>
        <authorList>
            <person name="Carninci P."/>
            <person name="Kasukawa T."/>
            <person name="Katayama S."/>
            <person name="Gough J."/>
            <person name="Frith M.C."/>
            <person name="Maeda N."/>
            <person name="Oyama R."/>
            <person name="Ravasi T."/>
            <person name="Lenhard B."/>
            <person name="Wells C."/>
            <person name="Kodzius R."/>
            <person name="Shimokawa K."/>
            <person name="Bajic V.B."/>
            <person name="Brenner S.E."/>
            <person name="Batalov S."/>
            <person name="Forrest A.R."/>
            <person name="Zavolan M."/>
            <person name="Davis M.J."/>
            <person name="Wilming L.G."/>
            <person name="Aidinis V."/>
            <person name="Allen J.E."/>
            <person name="Ambesi-Impiombato A."/>
            <person name="Apweiler R."/>
            <person name="Aturaliya R.N."/>
            <person name="Bailey T.L."/>
            <person name="Bansal M."/>
            <person name="Baxter L."/>
            <person name="Beisel K.W."/>
            <person name="Bersano T."/>
            <person name="Bono H."/>
            <person name="Chalk A.M."/>
            <person name="Chiu K.P."/>
            <person name="Choudhary V."/>
            <person name="Christoffels A."/>
            <person name="Clutterbuck D.R."/>
            <person name="Crowe M.L."/>
            <person name="Dalla E."/>
            <person name="Dalrymple B.P."/>
            <person name="de Bono B."/>
            <person name="Della Gatta G."/>
            <person name="di Bernardo D."/>
            <person name="Down T."/>
            <person name="Engstrom P."/>
            <person name="Fagiolini M."/>
            <person name="Faulkner G."/>
            <person name="Fletcher C.F."/>
            <person name="Fukushima T."/>
            <person name="Furuno M."/>
            <person name="Futaki S."/>
            <person name="Gariboldi M."/>
            <person name="Georgii-Hemming P."/>
            <person name="Gingeras T.R."/>
            <person name="Gojobori T."/>
            <person name="Green R.E."/>
            <person name="Gustincich S."/>
            <person name="Harbers M."/>
            <person name="Hayashi Y."/>
            <person name="Hensch T.K."/>
            <person name="Hirokawa N."/>
            <person name="Hill D."/>
            <person name="Huminiecki L."/>
            <person name="Iacono M."/>
            <person name="Ikeo K."/>
            <person name="Iwama A."/>
            <person name="Ishikawa T."/>
            <person name="Jakt M."/>
            <person name="Kanapin A."/>
            <person name="Katoh M."/>
            <person name="Kawasawa Y."/>
            <person name="Kelso J."/>
            <person name="Kitamura H."/>
            <person name="Kitano H."/>
            <person name="Kollias G."/>
            <person name="Krishnan S.P."/>
            <person name="Kruger A."/>
            <person name="Kummerfeld S.K."/>
            <person name="Kurochkin I.V."/>
            <person name="Lareau L.F."/>
            <person name="Lazarevic D."/>
            <person name="Lipovich L."/>
            <person name="Liu J."/>
            <person name="Liuni S."/>
            <person name="McWilliam S."/>
            <person name="Madan Babu M."/>
            <person name="Madera M."/>
            <person name="Marchionni L."/>
            <person name="Matsuda H."/>
            <person name="Matsuzawa S."/>
            <person name="Miki H."/>
            <person name="Mignone F."/>
            <person name="Miyake S."/>
            <person name="Morris K."/>
            <person name="Mottagui-Tabar S."/>
            <person name="Mulder N."/>
            <person name="Nakano N."/>
            <person name="Nakauchi H."/>
            <person name="Ng P."/>
            <person name="Nilsson R."/>
            <person name="Nishiguchi S."/>
            <person name="Nishikawa S."/>
            <person name="Nori F."/>
            <person name="Ohara O."/>
            <person name="Okazaki Y."/>
            <person name="Orlando V."/>
            <person name="Pang K.C."/>
            <person name="Pavan W.J."/>
            <person name="Pavesi G."/>
            <person name="Pesole G."/>
            <person name="Petrovsky N."/>
            <person name="Piazza S."/>
            <person name="Reed J."/>
            <person name="Reid J.F."/>
            <person name="Ring B.Z."/>
            <person name="Ringwald M."/>
            <person name="Rost B."/>
            <person name="Ruan Y."/>
            <person name="Salzberg S.L."/>
            <person name="Sandelin A."/>
            <person name="Schneider C."/>
            <person name="Schoenbach C."/>
            <person name="Sekiguchi K."/>
            <person name="Semple C.A."/>
            <person name="Seno S."/>
            <person name="Sessa L."/>
            <person name="Sheng Y."/>
            <person name="Shibata Y."/>
            <person name="Shimada H."/>
            <person name="Shimada K."/>
            <person name="Silva D."/>
            <person name="Sinclair B."/>
            <person name="Sperling S."/>
            <person name="Stupka E."/>
            <person name="Sugiura K."/>
            <person name="Sultana R."/>
            <person name="Takenaka Y."/>
            <person name="Taki K."/>
            <person name="Tammoja K."/>
            <person name="Tan S.L."/>
            <person name="Tang S."/>
            <person name="Taylor M.S."/>
            <person name="Tegner J."/>
            <person name="Teichmann S.A."/>
            <person name="Ueda H.R."/>
            <person name="van Nimwegen E."/>
            <person name="Verardo R."/>
            <person name="Wei C.L."/>
            <person name="Yagi K."/>
            <person name="Yamanishi H."/>
            <person name="Zabarovsky E."/>
            <person name="Zhu S."/>
            <person name="Zimmer A."/>
            <person name="Hide W."/>
            <person name="Bult C."/>
            <person name="Grimmond S.M."/>
            <person name="Teasdale R.D."/>
            <person name="Liu E.T."/>
            <person name="Brusic V."/>
            <person name="Quackenbush J."/>
            <person name="Wahlestedt C."/>
            <person name="Mattick J.S."/>
            <person name="Hume D.A."/>
            <person name="Kai C."/>
            <person name="Sasaki D."/>
            <person name="Tomaru Y."/>
            <person name="Fukuda S."/>
            <person name="Kanamori-Katayama M."/>
            <person name="Suzuki M."/>
            <person name="Aoki J."/>
            <person name="Arakawa T."/>
            <person name="Iida J."/>
            <person name="Imamura K."/>
            <person name="Itoh M."/>
            <person name="Kato T."/>
            <person name="Kawaji H."/>
            <person name="Kawagashira N."/>
            <person name="Kawashima T."/>
            <person name="Kojima M."/>
            <person name="Kondo S."/>
            <person name="Konno H."/>
            <person name="Nakano K."/>
            <person name="Ninomiya N."/>
            <person name="Nishio T."/>
            <person name="Okada M."/>
            <person name="Plessy C."/>
            <person name="Shibata K."/>
            <person name="Shiraki T."/>
            <person name="Suzuki S."/>
            <person name="Tagami M."/>
            <person name="Waki K."/>
            <person name="Watahiki A."/>
            <person name="Okamura-Oho Y."/>
            <person name="Suzuki H."/>
            <person name="Kawai J."/>
            <person name="Hayashizaki Y."/>
        </authorList>
    </citation>
    <scope>NUCLEOTIDE SEQUENCE [LARGE SCALE MRNA]</scope>
    <source>
        <strain>C57BL/6J</strain>
        <tissue>Embryo</tissue>
        <tissue>Head</tissue>
    </source>
</reference>
<reference key="2">
    <citation type="journal article" date="2004" name="Genome Res.">
        <title>The status, quality, and expansion of the NIH full-length cDNA project: the Mammalian Gene Collection (MGC).</title>
        <authorList>
            <consortium name="The MGC Project Team"/>
        </authorList>
    </citation>
    <scope>NUCLEOTIDE SEQUENCE [LARGE SCALE MRNA]</scope>
    <source>
        <strain>Czech II</strain>
        <tissue>Lung</tissue>
    </source>
</reference>
<reference key="3">
    <citation type="journal article" date="2007" name="Development">
        <title>Inca: a novel p21-activated kinase-associated protein required for cranial neural crest development.</title>
        <authorList>
            <person name="Luo T."/>
            <person name="Xu Y."/>
            <person name="Hoffman T.L."/>
            <person name="Zhang T."/>
            <person name="Schilling T."/>
            <person name="Sargent T.D."/>
        </authorList>
    </citation>
    <scope>IDENTIFICATION</scope>
    <scope>INTERACTION WITH PAK4</scope>
</reference>
<reference key="4">
    <citation type="journal article" date="2010" name="Dev. Dyn.">
        <title>Generation and characterization of a novel neural crest marker allele, Inka1-LacZ, reveals a role for Inka1 in mouse neural tube closure.</title>
        <authorList>
            <person name="Reid B.S."/>
            <person name="Sargent T.D."/>
            <person name="Williams T."/>
        </authorList>
    </citation>
    <scope>TISSUE SPECIFICITY</scope>
    <scope>DEVELOPMENTAL STAGE</scope>
    <scope>DISRUPTION PHENOTYPE</scope>
</reference>
<dbReference type="EMBL" id="AK020090">
    <property type="protein sequence ID" value="BAB31988.1"/>
    <property type="molecule type" value="mRNA"/>
</dbReference>
<dbReference type="EMBL" id="AK076092">
    <property type="protein sequence ID" value="BAC36176.1"/>
    <property type="molecule type" value="mRNA"/>
</dbReference>
<dbReference type="EMBL" id="BC051538">
    <property type="protein sequence ID" value="AAH51538.1"/>
    <property type="molecule type" value="mRNA"/>
</dbReference>
<dbReference type="EMBL" id="BC115538">
    <property type="protein sequence ID" value="AAI15539.1"/>
    <property type="molecule type" value="mRNA"/>
</dbReference>
<dbReference type="CCDS" id="CCDS52919.1"/>
<dbReference type="RefSeq" id="NP_080873.2">
    <property type="nucleotide sequence ID" value="NM_026597.4"/>
</dbReference>
<dbReference type="FunCoup" id="Q9CX62">
    <property type="interactions" value="1656"/>
</dbReference>
<dbReference type="STRING" id="10090.ENSMUSP00000040433"/>
<dbReference type="iPTMnet" id="Q9CX62"/>
<dbReference type="PhosphoSitePlus" id="Q9CX62"/>
<dbReference type="PaxDb" id="10090-ENSMUSP00000040433"/>
<dbReference type="ProteomicsDB" id="269486"/>
<dbReference type="Antibodypedia" id="46012">
    <property type="antibodies" value="72 antibodies from 20 providers"/>
</dbReference>
<dbReference type="Ensembl" id="ENSMUST00000048568.6">
    <property type="protein sequence ID" value="ENSMUSP00000040433.5"/>
    <property type="gene ID" value="ENSMUSG00000042106.6"/>
</dbReference>
<dbReference type="GeneID" id="68176"/>
<dbReference type="KEGG" id="mmu:68176"/>
<dbReference type="UCSC" id="uc009rnv.2">
    <property type="organism name" value="mouse"/>
</dbReference>
<dbReference type="AGR" id="MGI:1915426"/>
<dbReference type="CTD" id="389119"/>
<dbReference type="MGI" id="MGI:1915426">
    <property type="gene designation" value="Inka1"/>
</dbReference>
<dbReference type="VEuPathDB" id="HostDB:ENSMUSG00000042106"/>
<dbReference type="eggNOG" id="ENOG502R5BS">
    <property type="taxonomic scope" value="Eukaryota"/>
</dbReference>
<dbReference type="GeneTree" id="ENSGT00530000063849"/>
<dbReference type="HOGENOM" id="CLU_077157_0_0_1"/>
<dbReference type="InParanoid" id="Q9CX62"/>
<dbReference type="OMA" id="EVLCMKE"/>
<dbReference type="OrthoDB" id="8811265at2759"/>
<dbReference type="PhylomeDB" id="Q9CX62"/>
<dbReference type="TreeFam" id="TF332839"/>
<dbReference type="BioGRID-ORCS" id="68176">
    <property type="hits" value="1 hit in 76 CRISPR screens"/>
</dbReference>
<dbReference type="PRO" id="PR:Q9CX62"/>
<dbReference type="Proteomes" id="UP000000589">
    <property type="component" value="Chromosome 9"/>
</dbReference>
<dbReference type="RNAct" id="Q9CX62">
    <property type="molecule type" value="protein"/>
</dbReference>
<dbReference type="Bgee" id="ENSMUSG00000042106">
    <property type="expression patterns" value="Expressed in manus and 201 other cell types or tissues"/>
</dbReference>
<dbReference type="ExpressionAtlas" id="Q9CX62">
    <property type="expression patterns" value="baseline and differential"/>
</dbReference>
<dbReference type="GO" id="GO:0005737">
    <property type="term" value="C:cytoplasm"/>
    <property type="evidence" value="ECO:0000250"/>
    <property type="project" value="UniProtKB"/>
</dbReference>
<dbReference type="GO" id="GO:0005634">
    <property type="term" value="C:nucleus"/>
    <property type="evidence" value="ECO:0000250"/>
    <property type="project" value="UniProtKB"/>
</dbReference>
<dbReference type="GO" id="GO:0030291">
    <property type="term" value="F:protein serine/threonine kinase inhibitor activity"/>
    <property type="evidence" value="ECO:0000250"/>
    <property type="project" value="UniProtKB"/>
</dbReference>
<dbReference type="GO" id="GO:0021915">
    <property type="term" value="P:neural tube development"/>
    <property type="evidence" value="ECO:0000315"/>
    <property type="project" value="MGI"/>
</dbReference>
<dbReference type="FunFam" id="3.30.200.20:FF:000407">
    <property type="entry name" value="Inka box actin regulator 1"/>
    <property type="match status" value="1"/>
</dbReference>
<dbReference type="Gene3D" id="3.30.200.20">
    <property type="entry name" value="Phosphorylase Kinase, domain 1"/>
    <property type="match status" value="1"/>
</dbReference>
<dbReference type="InterPro" id="IPR029267">
    <property type="entry name" value="FAM212"/>
</dbReference>
<dbReference type="InterPro" id="IPR039201">
    <property type="entry name" value="Inka"/>
</dbReference>
<dbReference type="PANTHER" id="PTHR28615:SF1">
    <property type="entry name" value="PAK4-INHIBITOR INKA1"/>
    <property type="match status" value="1"/>
</dbReference>
<dbReference type="PANTHER" id="PTHR28615">
    <property type="entry name" value="PAK4-INHIBITOR INKA1-RELATED"/>
    <property type="match status" value="1"/>
</dbReference>
<dbReference type="Pfam" id="PF15342">
    <property type="entry name" value="FAM212"/>
    <property type="match status" value="1"/>
</dbReference>
<feature type="chain" id="PRO_0000239718" description="PAK4-inhibitor INKA1">
    <location>
        <begin position="1"/>
        <end position="282"/>
    </location>
</feature>
<feature type="region of interest" description="Disordered" evidence="2">
    <location>
        <begin position="21"/>
        <end position="50"/>
    </location>
</feature>
<feature type="region of interest" description="Disordered" evidence="2">
    <location>
        <begin position="92"/>
        <end position="127"/>
    </location>
</feature>
<feature type="region of interest" description="Inka box 1" evidence="1">
    <location>
        <begin position="163"/>
        <end position="200"/>
    </location>
</feature>
<feature type="region of interest" description="Inka box 2" evidence="1">
    <location>
        <begin position="256"/>
        <end position="282"/>
    </location>
</feature>
<feature type="sequence conflict" description="In Ref. 2; AAH51538." evidence="6" ref="2">
    <original>PLQ</original>
    <variation>GTR</variation>
    <location>
        <begin position="31"/>
        <end position="33"/>
    </location>
</feature>
<feature type="sequence conflict" description="In Ref. 1; BAB31988." evidence="6" ref="1">
    <original>S</original>
    <variation>F</variation>
    <location>
        <position position="225"/>
    </location>
</feature>
<accession>Q9CX62</accession>
<accession>Q08EG3</accession>
<accession>Q80WB2</accession>
<accession>Q8BPE9</accession>
<comment type="function">
    <text evidence="1">Inhibitor of the serine/threonine-protein kinase PAK4. Acts by binding PAK4 in a substrate-like manner, inhibiting the protein kinase activity.</text>
</comment>
<comment type="subunit">
    <text evidence="3">Interacts with PAK4 (PubMed:17314132).</text>
</comment>
<comment type="subcellular location">
    <subcellularLocation>
        <location evidence="1">Nucleus</location>
    </subcellularLocation>
    <subcellularLocation>
        <location evidence="1">Cytoplasm</location>
    </subcellularLocation>
    <text evidence="1">Mainly nuclear. Relocalizes to the cytoplasm following interaction with PAK4.</text>
</comment>
<comment type="tissue specificity">
    <text evidence="4">Expressed in tissues of the developing head during neurulation.</text>
</comment>
<comment type="developmental stage">
    <text evidence="4">Expressed in the cephalic mesenchyme, heart and paraxial mesoderm prior to 8.5 dpc. Expression is then observed in the migratory neural crest cells and their derivatives. As development progresses, expression is also observed in the limb buds and perichondrial tissue.</text>
</comment>
<comment type="domain">
    <text evidence="1">Contains 2 Inka boxes (also named iBox or inca box). The Inka boxes bind and inhibit PAK4 by binding a substrate-like manner.</text>
</comment>
<comment type="disruption phenotype">
    <text evidence="4">No visible phenotype in most cases: most mice are viable and fertile. A low percentage of mice show exencephaly.</text>
</comment>
<comment type="miscellaneous">
    <text evidence="4">Expression of Inka1 is not regulated by AP-2-alpha/Tfap2a, as it is the case for orthologous protein in zebrafish and Xenopus.</text>
</comment>
<comment type="similarity">
    <text evidence="6">Belongs to the INKA family.</text>
</comment>
<name>INKA1_MOUSE</name>
<sequence>MHSARLDSFLSQLRWELLCARDTGSPPMSGPLQPKPRTDQNVQPKRQFRASDVLEEDSVCCVEEEEEEGLVAEDKGLPLGCPREHALDWDSGFSEVSGSTWREEEPSVPQRQAPRERPPHSQRFSVSDIPMRSRAAVTNIPPAHRPRPKSTPDACLEHWQGLEAEDWTAALLNRGRSRQPLVLGDNCFADLVHNWMELPEATSEGSDGDVPRARARPPQFLLGLSEQLRRRLARARRTAMASKRLSCPPRSEPDLPADISRFAALMNCRSRQPIIYNDVSYL</sequence>
<keyword id="KW-0963">Cytoplasm</keyword>
<keyword id="KW-0539">Nucleus</keyword>
<keyword id="KW-1185">Reference proteome</keyword>
<organism>
    <name type="scientific">Mus musculus</name>
    <name type="common">Mouse</name>
    <dbReference type="NCBI Taxonomy" id="10090"/>
    <lineage>
        <taxon>Eukaryota</taxon>
        <taxon>Metazoa</taxon>
        <taxon>Chordata</taxon>
        <taxon>Craniata</taxon>
        <taxon>Vertebrata</taxon>
        <taxon>Euteleostomi</taxon>
        <taxon>Mammalia</taxon>
        <taxon>Eutheria</taxon>
        <taxon>Euarchontoglires</taxon>
        <taxon>Glires</taxon>
        <taxon>Rodentia</taxon>
        <taxon>Myomorpha</taxon>
        <taxon>Muroidea</taxon>
        <taxon>Muridae</taxon>
        <taxon>Murinae</taxon>
        <taxon>Mus</taxon>
        <taxon>Mus</taxon>
    </lineage>
</organism>
<gene>
    <name evidence="7" type="primary">Inka1</name>
    <name type="synonym">Fam212a</name>
</gene>